<comment type="function">
    <text evidence="1">Catalyzes several different glutathione-dependent reactions. Catalyzes the glutathione-dependent reduction of lipid hydroperoxides, such as 5-HPETE. Has glutathione transferase activity, toward xenobiotic electrophiles, such as 1-chloro-2, 4-dinitrobenzene (CDNB). Also catalyzes the conjugation of leukotriene A4 with reduced glutathione to form leukotriene C4 (LTC4). Involved in oxidative DNA damage induced by ER stress and anticancer agents by activating LTC4 biosynthetic machinery in nonimmune cells.</text>
</comment>
<comment type="catalytic activity">
    <reaction evidence="1">
        <text>RX + glutathione = an S-substituted glutathione + a halide anion + H(+)</text>
        <dbReference type="Rhea" id="RHEA:16437"/>
        <dbReference type="ChEBI" id="CHEBI:15378"/>
        <dbReference type="ChEBI" id="CHEBI:16042"/>
        <dbReference type="ChEBI" id="CHEBI:17792"/>
        <dbReference type="ChEBI" id="CHEBI:57925"/>
        <dbReference type="ChEBI" id="CHEBI:90779"/>
        <dbReference type="EC" id="2.5.1.18"/>
    </reaction>
</comment>
<comment type="catalytic activity">
    <reaction evidence="1">
        <text>1-chloro-2,4-dinitrobenzene + glutathione = 2,4-dinitrophenyl-S-glutathione + chloride + H(+)</text>
        <dbReference type="Rhea" id="RHEA:51220"/>
        <dbReference type="ChEBI" id="CHEBI:15378"/>
        <dbReference type="ChEBI" id="CHEBI:17996"/>
        <dbReference type="ChEBI" id="CHEBI:34718"/>
        <dbReference type="ChEBI" id="CHEBI:57925"/>
        <dbReference type="ChEBI" id="CHEBI:133977"/>
        <dbReference type="EC" id="2.5.1.18"/>
    </reaction>
</comment>
<comment type="catalytic activity">
    <reaction evidence="1">
        <text>leukotriene C4 = leukotriene A4 + glutathione</text>
        <dbReference type="Rhea" id="RHEA:17617"/>
        <dbReference type="ChEBI" id="CHEBI:57463"/>
        <dbReference type="ChEBI" id="CHEBI:57925"/>
        <dbReference type="ChEBI" id="CHEBI:57973"/>
        <dbReference type="EC" id="4.4.1.20"/>
    </reaction>
</comment>
<comment type="catalytic activity">
    <reaction evidence="1">
        <text>(5S)-hydroperoxy-(6E,8Z,11Z,14Z)-eicosatetraenoate + 2 glutathione = (5S)-hydroxy-(6E,8Z,11Z,14Z)-eicosatetraenoate + glutathione disulfide + H2O</text>
        <dbReference type="Rhea" id="RHEA:48620"/>
        <dbReference type="ChEBI" id="CHEBI:15377"/>
        <dbReference type="ChEBI" id="CHEBI:57450"/>
        <dbReference type="ChEBI" id="CHEBI:57925"/>
        <dbReference type="ChEBI" id="CHEBI:58297"/>
        <dbReference type="ChEBI" id="CHEBI:90632"/>
    </reaction>
</comment>
<comment type="activity regulation">
    <text evidence="1">Each monomer binds on GSH molecule but only one subunit is catalytically active.</text>
</comment>
<comment type="subunit">
    <text evidence="1">Homotrimer.</text>
</comment>
<comment type="subcellular location">
    <subcellularLocation>
        <location evidence="1">Endoplasmic reticulum membrane</location>
        <topology evidence="2">Multi-pass membrane protein</topology>
    </subcellularLocation>
    <subcellularLocation>
        <location evidence="1">Microsome membrane</location>
        <topology evidence="2">Multi-pass membrane protein</topology>
    </subcellularLocation>
</comment>
<comment type="similarity">
    <text evidence="3">Belongs to the MAPEG family.</text>
</comment>
<proteinExistence type="evidence at transcript level"/>
<feature type="chain" id="PRO_0000246087" description="Microsomal glutathione S-transferase 2">
    <location>
        <begin position="1"/>
        <end position="146"/>
    </location>
</feature>
<feature type="transmembrane region" description="Helical" evidence="2">
    <location>
        <begin position="6"/>
        <end position="26"/>
    </location>
</feature>
<feature type="transmembrane region" description="Helical" evidence="2">
    <location>
        <begin position="59"/>
        <end position="79"/>
    </location>
</feature>
<feature type="transmembrane region" description="Helical" evidence="2">
    <location>
        <begin position="111"/>
        <end position="131"/>
    </location>
</feature>
<keyword id="KW-0256">Endoplasmic reticulum</keyword>
<keyword id="KW-0434">Leukotriene biosynthesis</keyword>
<keyword id="KW-0443">Lipid metabolism</keyword>
<keyword id="KW-0456">Lyase</keyword>
<keyword id="KW-0472">Membrane</keyword>
<keyword id="KW-0492">Microsome</keyword>
<keyword id="KW-0560">Oxidoreductase</keyword>
<keyword id="KW-1185">Reference proteome</keyword>
<keyword id="KW-0808">Transferase</keyword>
<keyword id="KW-0812">Transmembrane</keyword>
<keyword id="KW-1133">Transmembrane helix</keyword>
<evidence type="ECO:0000250" key="1">
    <source>
        <dbReference type="UniProtKB" id="Q99735"/>
    </source>
</evidence>
<evidence type="ECO:0000255" key="2"/>
<evidence type="ECO:0000305" key="3"/>
<organism>
    <name type="scientific">Bos taurus</name>
    <name type="common">Bovine</name>
    <dbReference type="NCBI Taxonomy" id="9913"/>
    <lineage>
        <taxon>Eukaryota</taxon>
        <taxon>Metazoa</taxon>
        <taxon>Chordata</taxon>
        <taxon>Craniata</taxon>
        <taxon>Vertebrata</taxon>
        <taxon>Euteleostomi</taxon>
        <taxon>Mammalia</taxon>
        <taxon>Eutheria</taxon>
        <taxon>Laurasiatheria</taxon>
        <taxon>Artiodactyla</taxon>
        <taxon>Ruminantia</taxon>
        <taxon>Pecora</taxon>
        <taxon>Bovidae</taxon>
        <taxon>Bovinae</taxon>
        <taxon>Bos</taxon>
    </lineage>
</organism>
<protein>
    <recommendedName>
        <fullName>Microsomal glutathione S-transferase 2</fullName>
        <shortName>Microsomal GST-2</shortName>
        <ecNumber evidence="1">2.5.1.18</ecNumber>
    </recommendedName>
    <alternativeName>
        <fullName>Glutathione peroxidase MGST2</fullName>
        <ecNumber evidence="1">1.11.1.-</ecNumber>
    </alternativeName>
    <alternativeName>
        <fullName>Leukotriene C4 synthase MGST2</fullName>
        <ecNumber evidence="1">4.4.1.20</ecNumber>
    </alternativeName>
    <alternativeName>
        <fullName>Microsomal glutathione S-transferase II</fullName>
        <shortName>Microsomal GST-II</shortName>
    </alternativeName>
</protein>
<dbReference type="EC" id="2.5.1.18" evidence="1"/>
<dbReference type="EC" id="1.11.1.-" evidence="1"/>
<dbReference type="EC" id="4.4.1.20" evidence="1"/>
<dbReference type="EMBL" id="BT025439">
    <property type="protein sequence ID" value="ABF57395.1"/>
    <property type="molecule type" value="mRNA"/>
</dbReference>
<dbReference type="EMBL" id="BC105356">
    <property type="protein sequence ID" value="AAI05357.1"/>
    <property type="molecule type" value="mRNA"/>
</dbReference>
<dbReference type="RefSeq" id="NP_001069850.1">
    <property type="nucleotide sequence ID" value="NM_001076382.1"/>
</dbReference>
<dbReference type="SMR" id="Q2KJG4"/>
<dbReference type="FunCoup" id="Q2KJG4">
    <property type="interactions" value="185"/>
</dbReference>
<dbReference type="STRING" id="9913.ENSBTAP00000029028"/>
<dbReference type="PaxDb" id="9913-ENSBTAP00000029028"/>
<dbReference type="Ensembl" id="ENSBTAT00000029028.4">
    <property type="protein sequence ID" value="ENSBTAP00000029028.3"/>
    <property type="gene ID" value="ENSBTAG00000021779.5"/>
</dbReference>
<dbReference type="GeneID" id="615552"/>
<dbReference type="KEGG" id="bta:615552"/>
<dbReference type="CTD" id="4258"/>
<dbReference type="VEuPathDB" id="HostDB:ENSBTAG00000021779"/>
<dbReference type="VGNC" id="VGNC:31452">
    <property type="gene designation" value="MGST2"/>
</dbReference>
<dbReference type="eggNOG" id="ENOG502S082">
    <property type="taxonomic scope" value="Eukaryota"/>
</dbReference>
<dbReference type="GeneTree" id="ENSGT00940000160288"/>
<dbReference type="HOGENOM" id="CLU_110291_3_0_1"/>
<dbReference type="InParanoid" id="Q2KJG4"/>
<dbReference type="OMA" id="HKYFWGY"/>
<dbReference type="OrthoDB" id="410651at2759"/>
<dbReference type="TreeFam" id="TF105328"/>
<dbReference type="Reactome" id="R-BTA-156590">
    <property type="pathway name" value="Glutathione conjugation"/>
</dbReference>
<dbReference type="Reactome" id="R-BTA-5423646">
    <property type="pathway name" value="Aflatoxin activation and detoxification"/>
</dbReference>
<dbReference type="Proteomes" id="UP000009136">
    <property type="component" value="Chromosome 17"/>
</dbReference>
<dbReference type="Bgee" id="ENSBTAG00000021779">
    <property type="expression patterns" value="Expressed in metanephros cortex and 104 other cell types or tissues"/>
</dbReference>
<dbReference type="GO" id="GO:0005783">
    <property type="term" value="C:endoplasmic reticulum"/>
    <property type="evidence" value="ECO:0000318"/>
    <property type="project" value="GO_Central"/>
</dbReference>
<dbReference type="GO" id="GO:0005789">
    <property type="term" value="C:endoplasmic reticulum membrane"/>
    <property type="evidence" value="ECO:0007669"/>
    <property type="project" value="UniProtKB-SubCell"/>
</dbReference>
<dbReference type="GO" id="GO:0043231">
    <property type="term" value="C:intracellular membrane-bounded organelle"/>
    <property type="evidence" value="ECO:0000250"/>
    <property type="project" value="UniProtKB"/>
</dbReference>
<dbReference type="GO" id="GO:0005635">
    <property type="term" value="C:nuclear envelope"/>
    <property type="evidence" value="ECO:0000318"/>
    <property type="project" value="GO_Central"/>
</dbReference>
<dbReference type="GO" id="GO:0008047">
    <property type="term" value="F:enzyme activator activity"/>
    <property type="evidence" value="ECO:0007669"/>
    <property type="project" value="InterPro"/>
</dbReference>
<dbReference type="GO" id="GO:0043295">
    <property type="term" value="F:glutathione binding"/>
    <property type="evidence" value="ECO:0000250"/>
    <property type="project" value="UniProtKB"/>
</dbReference>
<dbReference type="GO" id="GO:0004602">
    <property type="term" value="F:glutathione peroxidase activity"/>
    <property type="evidence" value="ECO:0000250"/>
    <property type="project" value="UniProtKB"/>
</dbReference>
<dbReference type="GO" id="GO:0004364">
    <property type="term" value="F:glutathione transferase activity"/>
    <property type="evidence" value="ECO:0000318"/>
    <property type="project" value="GO_Central"/>
</dbReference>
<dbReference type="GO" id="GO:0042802">
    <property type="term" value="F:identical protein binding"/>
    <property type="evidence" value="ECO:0000250"/>
    <property type="project" value="UniProtKB"/>
</dbReference>
<dbReference type="GO" id="GO:0004464">
    <property type="term" value="F:leukotriene-C4 synthase activity"/>
    <property type="evidence" value="ECO:0000250"/>
    <property type="project" value="UniProtKB"/>
</dbReference>
<dbReference type="GO" id="GO:0019370">
    <property type="term" value="P:leukotriene biosynthetic process"/>
    <property type="evidence" value="ECO:0000250"/>
    <property type="project" value="UniProtKB"/>
</dbReference>
<dbReference type="GO" id="GO:0006629">
    <property type="term" value="P:lipid metabolic process"/>
    <property type="evidence" value="ECO:0000250"/>
    <property type="project" value="UniProtKB"/>
</dbReference>
<dbReference type="FunFam" id="1.20.120.550:FF:000003">
    <property type="entry name" value="Leukotriene C4 synthase"/>
    <property type="match status" value="1"/>
</dbReference>
<dbReference type="Gene3D" id="1.20.120.550">
    <property type="entry name" value="Membrane associated eicosanoid/glutathione metabolism-like domain"/>
    <property type="match status" value="1"/>
</dbReference>
<dbReference type="InterPro" id="IPR001446">
    <property type="entry name" value="5_LipOase_AP"/>
</dbReference>
<dbReference type="InterPro" id="IPR050997">
    <property type="entry name" value="MAPEG"/>
</dbReference>
<dbReference type="InterPro" id="IPR023352">
    <property type="entry name" value="MAPEG-like_dom_sf"/>
</dbReference>
<dbReference type="InterPro" id="IPR001129">
    <property type="entry name" value="Membr-assoc_MAPEG"/>
</dbReference>
<dbReference type="PANTHER" id="PTHR10250">
    <property type="entry name" value="MICROSOMAL GLUTATHIONE S-TRANSFERASE"/>
    <property type="match status" value="1"/>
</dbReference>
<dbReference type="PANTHER" id="PTHR10250:SF13">
    <property type="entry name" value="MICROSOMAL GLUTATHIONE S-TRANSFERASE 2"/>
    <property type="match status" value="1"/>
</dbReference>
<dbReference type="Pfam" id="PF01124">
    <property type="entry name" value="MAPEG"/>
    <property type="match status" value="1"/>
</dbReference>
<dbReference type="PRINTS" id="PR00488">
    <property type="entry name" value="5LPOXGNASEAP"/>
</dbReference>
<dbReference type="SUPFAM" id="SSF161084">
    <property type="entry name" value="MAPEG domain-like"/>
    <property type="match status" value="1"/>
</dbReference>
<name>MGST2_BOVIN</name>
<accession>Q2KJG4</accession>
<reference key="1">
    <citation type="journal article" date="2005" name="BMC Genomics">
        <title>Characterization of 954 bovine full-CDS cDNA sequences.</title>
        <authorList>
            <person name="Harhay G.P."/>
            <person name="Sonstegard T.S."/>
            <person name="Keele J.W."/>
            <person name="Heaton M.P."/>
            <person name="Clawson M.L."/>
            <person name="Snelling W.M."/>
            <person name="Wiedmann R.T."/>
            <person name="Van Tassell C.P."/>
            <person name="Smith T.P.L."/>
        </authorList>
    </citation>
    <scope>NUCLEOTIDE SEQUENCE [LARGE SCALE MRNA]</scope>
</reference>
<reference key="2">
    <citation type="submission" date="2005-09" db="EMBL/GenBank/DDBJ databases">
        <authorList>
            <consortium name="NIH - Mammalian Gene Collection (MGC) project"/>
        </authorList>
    </citation>
    <scope>NUCLEOTIDE SEQUENCE [LARGE SCALE MRNA]</scope>
    <source>
        <strain>Crossbred X Angus</strain>
        <tissue>Ileum</tissue>
    </source>
</reference>
<sequence length="146" mass="16483">MAGNSILLAALSVLSACQQSYFAMQVGKARSKYKVTPPSVSGSPDFERIFRAQQNCVEFYPIFIITLWMAGWYFNQVFATCLGLVYIYSRHQYFWGYAEAAKKRVTGFRLSLGVLALLTVLGAVGILNSFLDEYLDIDIAKKLRHF</sequence>
<gene>
    <name type="primary">MGST2</name>
</gene>